<evidence type="ECO:0000255" key="1">
    <source>
        <dbReference type="HAMAP-Rule" id="MF_00360"/>
    </source>
</evidence>
<evidence type="ECO:0000256" key="2">
    <source>
        <dbReference type="SAM" id="MobiDB-lite"/>
    </source>
</evidence>
<evidence type="ECO:0000305" key="3"/>
<reference key="1">
    <citation type="submission" date="2009-01" db="EMBL/GenBank/DDBJ databases">
        <title>Complete sequence of Diaphorobacter sp. TPSY.</title>
        <authorList>
            <consortium name="US DOE Joint Genome Institute"/>
            <person name="Lucas S."/>
            <person name="Copeland A."/>
            <person name="Lapidus A."/>
            <person name="Glavina del Rio T."/>
            <person name="Tice H."/>
            <person name="Bruce D."/>
            <person name="Goodwin L."/>
            <person name="Pitluck S."/>
            <person name="Chertkov O."/>
            <person name="Brettin T."/>
            <person name="Detter J.C."/>
            <person name="Han C."/>
            <person name="Larimer F."/>
            <person name="Land M."/>
            <person name="Hauser L."/>
            <person name="Kyrpides N."/>
            <person name="Mikhailova N."/>
            <person name="Coates J.D."/>
        </authorList>
    </citation>
    <scope>NUCLEOTIDE SEQUENCE [LARGE SCALE GENOMIC DNA]</scope>
    <source>
        <strain>TPSY</strain>
    </source>
</reference>
<accession>B9MDJ5</accession>
<name>RS6_ACIET</name>
<keyword id="KW-1185">Reference proteome</keyword>
<keyword id="KW-0687">Ribonucleoprotein</keyword>
<keyword id="KW-0689">Ribosomal protein</keyword>
<keyword id="KW-0694">RNA-binding</keyword>
<keyword id="KW-0699">rRNA-binding</keyword>
<feature type="chain" id="PRO_1000133526" description="Small ribosomal subunit protein bS6">
    <location>
        <begin position="1"/>
        <end position="125"/>
    </location>
</feature>
<feature type="region of interest" description="Disordered" evidence="2">
    <location>
        <begin position="94"/>
        <end position="125"/>
    </location>
</feature>
<feature type="compositionally biased region" description="Basic and acidic residues" evidence="2">
    <location>
        <begin position="105"/>
        <end position="115"/>
    </location>
</feature>
<dbReference type="EMBL" id="CP001392">
    <property type="protein sequence ID" value="ACM34004.1"/>
    <property type="molecule type" value="Genomic_DNA"/>
</dbReference>
<dbReference type="RefSeq" id="WP_011806337.1">
    <property type="nucleotide sequence ID" value="NC_011992.1"/>
</dbReference>
<dbReference type="SMR" id="B9MDJ5"/>
<dbReference type="GeneID" id="84680680"/>
<dbReference type="KEGG" id="dia:Dtpsy_2569"/>
<dbReference type="eggNOG" id="COG0360">
    <property type="taxonomic scope" value="Bacteria"/>
</dbReference>
<dbReference type="HOGENOM" id="CLU_113441_6_1_4"/>
<dbReference type="Proteomes" id="UP000000450">
    <property type="component" value="Chromosome"/>
</dbReference>
<dbReference type="GO" id="GO:0022627">
    <property type="term" value="C:cytosolic small ribosomal subunit"/>
    <property type="evidence" value="ECO:0007669"/>
    <property type="project" value="TreeGrafter"/>
</dbReference>
<dbReference type="GO" id="GO:0070181">
    <property type="term" value="F:small ribosomal subunit rRNA binding"/>
    <property type="evidence" value="ECO:0007669"/>
    <property type="project" value="TreeGrafter"/>
</dbReference>
<dbReference type="GO" id="GO:0003735">
    <property type="term" value="F:structural constituent of ribosome"/>
    <property type="evidence" value="ECO:0007669"/>
    <property type="project" value="InterPro"/>
</dbReference>
<dbReference type="GO" id="GO:0006412">
    <property type="term" value="P:translation"/>
    <property type="evidence" value="ECO:0007669"/>
    <property type="project" value="UniProtKB-UniRule"/>
</dbReference>
<dbReference type="CDD" id="cd00473">
    <property type="entry name" value="bS6"/>
    <property type="match status" value="1"/>
</dbReference>
<dbReference type="Gene3D" id="3.30.70.60">
    <property type="match status" value="1"/>
</dbReference>
<dbReference type="HAMAP" id="MF_00360">
    <property type="entry name" value="Ribosomal_bS6"/>
    <property type="match status" value="1"/>
</dbReference>
<dbReference type="InterPro" id="IPR000529">
    <property type="entry name" value="Ribosomal_bS6"/>
</dbReference>
<dbReference type="InterPro" id="IPR020815">
    <property type="entry name" value="Ribosomal_bS6_CS"/>
</dbReference>
<dbReference type="InterPro" id="IPR035980">
    <property type="entry name" value="Ribosomal_bS6_sf"/>
</dbReference>
<dbReference type="InterPro" id="IPR020814">
    <property type="entry name" value="Ribosomal_S6_plastid/chlpt"/>
</dbReference>
<dbReference type="InterPro" id="IPR014717">
    <property type="entry name" value="Transl_elong_EF1B/ribsomal_bS6"/>
</dbReference>
<dbReference type="NCBIfam" id="TIGR00166">
    <property type="entry name" value="S6"/>
    <property type="match status" value="1"/>
</dbReference>
<dbReference type="PANTHER" id="PTHR21011">
    <property type="entry name" value="MITOCHONDRIAL 28S RIBOSOMAL PROTEIN S6"/>
    <property type="match status" value="1"/>
</dbReference>
<dbReference type="PANTHER" id="PTHR21011:SF1">
    <property type="entry name" value="SMALL RIBOSOMAL SUBUNIT PROTEIN BS6M"/>
    <property type="match status" value="1"/>
</dbReference>
<dbReference type="Pfam" id="PF01250">
    <property type="entry name" value="Ribosomal_S6"/>
    <property type="match status" value="1"/>
</dbReference>
<dbReference type="SUPFAM" id="SSF54995">
    <property type="entry name" value="Ribosomal protein S6"/>
    <property type="match status" value="1"/>
</dbReference>
<dbReference type="PROSITE" id="PS01048">
    <property type="entry name" value="RIBOSOMAL_S6"/>
    <property type="match status" value="1"/>
</dbReference>
<organism>
    <name type="scientific">Acidovorax ebreus (strain TPSY)</name>
    <name type="common">Diaphorobacter sp. (strain TPSY)</name>
    <dbReference type="NCBI Taxonomy" id="535289"/>
    <lineage>
        <taxon>Bacteria</taxon>
        <taxon>Pseudomonadati</taxon>
        <taxon>Pseudomonadota</taxon>
        <taxon>Betaproteobacteria</taxon>
        <taxon>Burkholderiales</taxon>
        <taxon>Comamonadaceae</taxon>
        <taxon>Diaphorobacter</taxon>
    </lineage>
</organism>
<sequence>MRHYEIILLIHPDQSEQVPAMLERYKGMIVAGGGQVHRVEDWGRRQLAYLINKLAKAHYLCLNIEADQAVMAELEHAFKFNDAVLRHLTVQKKKAETGASSMMKTVEREEARKASQAEFAASNER</sequence>
<proteinExistence type="inferred from homology"/>
<comment type="function">
    <text evidence="1">Binds together with bS18 to 16S ribosomal RNA.</text>
</comment>
<comment type="similarity">
    <text evidence="1">Belongs to the bacterial ribosomal protein bS6 family.</text>
</comment>
<protein>
    <recommendedName>
        <fullName evidence="1">Small ribosomal subunit protein bS6</fullName>
    </recommendedName>
    <alternativeName>
        <fullName evidence="3">30S ribosomal protein S6</fullName>
    </alternativeName>
</protein>
<gene>
    <name evidence="1" type="primary">rpsF</name>
    <name type="ordered locus">Dtpsy_2569</name>
</gene>